<keyword id="KW-0113">Calvin cycle</keyword>
<keyword id="KW-0120">Carbon dioxide fixation</keyword>
<keyword id="KW-0150">Chloroplast</keyword>
<keyword id="KW-1015">Disulfide bond</keyword>
<keyword id="KW-0456">Lyase</keyword>
<keyword id="KW-0460">Magnesium</keyword>
<keyword id="KW-0479">Metal-binding</keyword>
<keyword id="KW-0503">Monooxygenase</keyword>
<keyword id="KW-0560">Oxidoreductase</keyword>
<keyword id="KW-0597">Phosphoprotein</keyword>
<keyword id="KW-0601">Photorespiration</keyword>
<keyword id="KW-0602">Photosynthesis</keyword>
<keyword id="KW-0934">Plastid</keyword>
<name>RBL_AETCO</name>
<gene>
    <name evidence="2" type="primary">rbcL</name>
</gene>
<dbReference type="EC" id="4.1.1.39" evidence="2"/>
<dbReference type="EMBL" id="AP009366">
    <property type="protein sequence ID" value="BAF49778.1"/>
    <property type="molecule type" value="Genomic_DNA"/>
</dbReference>
<dbReference type="RefSeq" id="YP_001122954.1">
    <property type="nucleotide sequence ID" value="NC_009265.1"/>
</dbReference>
<dbReference type="SMR" id="A4QJC3"/>
<dbReference type="GeneID" id="4968541"/>
<dbReference type="GO" id="GO:0009507">
    <property type="term" value="C:chloroplast"/>
    <property type="evidence" value="ECO:0007669"/>
    <property type="project" value="UniProtKB-SubCell"/>
</dbReference>
<dbReference type="GO" id="GO:0000287">
    <property type="term" value="F:magnesium ion binding"/>
    <property type="evidence" value="ECO:0007669"/>
    <property type="project" value="UniProtKB-UniRule"/>
</dbReference>
<dbReference type="GO" id="GO:0004497">
    <property type="term" value="F:monooxygenase activity"/>
    <property type="evidence" value="ECO:0007669"/>
    <property type="project" value="UniProtKB-KW"/>
</dbReference>
<dbReference type="GO" id="GO:0016984">
    <property type="term" value="F:ribulose-bisphosphate carboxylase activity"/>
    <property type="evidence" value="ECO:0007669"/>
    <property type="project" value="UniProtKB-UniRule"/>
</dbReference>
<dbReference type="GO" id="GO:0009853">
    <property type="term" value="P:photorespiration"/>
    <property type="evidence" value="ECO:0007669"/>
    <property type="project" value="UniProtKB-KW"/>
</dbReference>
<dbReference type="GO" id="GO:0019253">
    <property type="term" value="P:reductive pentose-phosphate cycle"/>
    <property type="evidence" value="ECO:0007669"/>
    <property type="project" value="UniProtKB-UniRule"/>
</dbReference>
<dbReference type="CDD" id="cd08212">
    <property type="entry name" value="RuBisCO_large_I"/>
    <property type="match status" value="1"/>
</dbReference>
<dbReference type="FunFam" id="3.20.20.110:FF:000001">
    <property type="entry name" value="Ribulose bisphosphate carboxylase large chain"/>
    <property type="match status" value="1"/>
</dbReference>
<dbReference type="FunFam" id="3.30.70.150:FF:000001">
    <property type="entry name" value="Ribulose bisphosphate carboxylase large chain"/>
    <property type="match status" value="1"/>
</dbReference>
<dbReference type="Gene3D" id="3.20.20.110">
    <property type="entry name" value="Ribulose bisphosphate carboxylase, large subunit, C-terminal domain"/>
    <property type="match status" value="1"/>
</dbReference>
<dbReference type="Gene3D" id="3.30.70.150">
    <property type="entry name" value="RuBisCO large subunit, N-terminal domain"/>
    <property type="match status" value="1"/>
</dbReference>
<dbReference type="HAMAP" id="MF_01338">
    <property type="entry name" value="RuBisCO_L_type1"/>
    <property type="match status" value="1"/>
</dbReference>
<dbReference type="InterPro" id="IPR033966">
    <property type="entry name" value="RuBisCO"/>
</dbReference>
<dbReference type="InterPro" id="IPR020878">
    <property type="entry name" value="RuBisCo_large_chain_AS"/>
</dbReference>
<dbReference type="InterPro" id="IPR000685">
    <property type="entry name" value="RuBisCO_lsu_C"/>
</dbReference>
<dbReference type="InterPro" id="IPR036376">
    <property type="entry name" value="RuBisCO_lsu_C_sf"/>
</dbReference>
<dbReference type="InterPro" id="IPR017443">
    <property type="entry name" value="RuBisCO_lsu_fd_N"/>
</dbReference>
<dbReference type="InterPro" id="IPR036422">
    <property type="entry name" value="RuBisCO_lsu_N_sf"/>
</dbReference>
<dbReference type="InterPro" id="IPR020888">
    <property type="entry name" value="RuBisCO_lsuI"/>
</dbReference>
<dbReference type="NCBIfam" id="NF003252">
    <property type="entry name" value="PRK04208.1"/>
    <property type="match status" value="1"/>
</dbReference>
<dbReference type="PANTHER" id="PTHR42704">
    <property type="entry name" value="RIBULOSE BISPHOSPHATE CARBOXYLASE"/>
    <property type="match status" value="1"/>
</dbReference>
<dbReference type="PANTHER" id="PTHR42704:SF16">
    <property type="entry name" value="RIBULOSE BISPHOSPHATE CARBOXYLASE LARGE CHAIN"/>
    <property type="match status" value="1"/>
</dbReference>
<dbReference type="Pfam" id="PF00016">
    <property type="entry name" value="RuBisCO_large"/>
    <property type="match status" value="1"/>
</dbReference>
<dbReference type="Pfam" id="PF02788">
    <property type="entry name" value="RuBisCO_large_N"/>
    <property type="match status" value="1"/>
</dbReference>
<dbReference type="SFLD" id="SFLDG01052">
    <property type="entry name" value="RuBisCO"/>
    <property type="match status" value="1"/>
</dbReference>
<dbReference type="SFLD" id="SFLDS00014">
    <property type="entry name" value="RuBisCO"/>
    <property type="match status" value="1"/>
</dbReference>
<dbReference type="SFLD" id="SFLDG00301">
    <property type="entry name" value="RuBisCO-like_proteins"/>
    <property type="match status" value="1"/>
</dbReference>
<dbReference type="SUPFAM" id="SSF51649">
    <property type="entry name" value="RuBisCo, C-terminal domain"/>
    <property type="match status" value="1"/>
</dbReference>
<dbReference type="SUPFAM" id="SSF54966">
    <property type="entry name" value="RuBisCO, large subunit, small (N-terminal) domain"/>
    <property type="match status" value="1"/>
</dbReference>
<dbReference type="PROSITE" id="PS00157">
    <property type="entry name" value="RUBISCO_LARGE"/>
    <property type="match status" value="1"/>
</dbReference>
<proteinExistence type="inferred from homology"/>
<feature type="propeptide" id="PRO_0000299977" evidence="2">
    <location>
        <begin position="1"/>
        <end position="2"/>
    </location>
</feature>
<feature type="chain" id="PRO_0000299978" description="Ribulose bisphosphate carboxylase large chain">
    <location>
        <begin position="3"/>
        <end position="483"/>
    </location>
</feature>
<feature type="active site" description="Proton acceptor" evidence="2">
    <location>
        <position position="175"/>
    </location>
</feature>
<feature type="active site" description="Proton acceptor" evidence="2">
    <location>
        <position position="294"/>
    </location>
</feature>
<feature type="binding site" description="in homodimeric partner" evidence="2">
    <location>
        <position position="123"/>
    </location>
    <ligand>
        <name>substrate</name>
    </ligand>
</feature>
<feature type="binding site" evidence="2">
    <location>
        <position position="173"/>
    </location>
    <ligand>
        <name>substrate</name>
    </ligand>
</feature>
<feature type="binding site" evidence="2">
    <location>
        <position position="177"/>
    </location>
    <ligand>
        <name>substrate</name>
    </ligand>
</feature>
<feature type="binding site" description="via carbamate group" evidence="2">
    <location>
        <position position="201"/>
    </location>
    <ligand>
        <name>Mg(2+)</name>
        <dbReference type="ChEBI" id="CHEBI:18420"/>
    </ligand>
</feature>
<feature type="binding site" evidence="2">
    <location>
        <position position="203"/>
    </location>
    <ligand>
        <name>Mg(2+)</name>
        <dbReference type="ChEBI" id="CHEBI:18420"/>
    </ligand>
</feature>
<feature type="binding site" evidence="2">
    <location>
        <position position="204"/>
    </location>
    <ligand>
        <name>Mg(2+)</name>
        <dbReference type="ChEBI" id="CHEBI:18420"/>
    </ligand>
</feature>
<feature type="binding site" evidence="2">
    <location>
        <position position="295"/>
    </location>
    <ligand>
        <name>substrate</name>
    </ligand>
</feature>
<feature type="binding site" evidence="2">
    <location>
        <position position="327"/>
    </location>
    <ligand>
        <name>substrate</name>
    </ligand>
</feature>
<feature type="binding site" evidence="2">
    <location>
        <position position="379"/>
    </location>
    <ligand>
        <name>substrate</name>
    </ligand>
</feature>
<feature type="site" description="Transition state stabilizer" evidence="2">
    <location>
        <position position="334"/>
    </location>
</feature>
<feature type="modified residue" description="N6-carboxylysine" evidence="2">
    <location>
        <position position="201"/>
    </location>
</feature>
<feature type="modified residue" description="Phosphoserine" evidence="1">
    <location>
        <position position="208"/>
    </location>
</feature>
<feature type="modified residue" description="Phosphothreonine" evidence="1">
    <location>
        <position position="330"/>
    </location>
</feature>
<feature type="disulfide bond" description="Interchain; in linked form" evidence="2">
    <location>
        <position position="247"/>
    </location>
</feature>
<accession>A4QJC3</accession>
<organism>
    <name type="scientific">Aethionema cordifolium</name>
    <name type="common">Lebanon stonecress</name>
    <dbReference type="NCBI Taxonomy" id="434059"/>
    <lineage>
        <taxon>Eukaryota</taxon>
        <taxon>Viridiplantae</taxon>
        <taxon>Streptophyta</taxon>
        <taxon>Embryophyta</taxon>
        <taxon>Tracheophyta</taxon>
        <taxon>Spermatophyta</taxon>
        <taxon>Magnoliopsida</taxon>
        <taxon>eudicotyledons</taxon>
        <taxon>Gunneridae</taxon>
        <taxon>Pentapetalae</taxon>
        <taxon>rosids</taxon>
        <taxon>malvids</taxon>
        <taxon>Brassicales</taxon>
        <taxon>Brassicaceae</taxon>
        <taxon>Aethionemeae</taxon>
        <taxon>Aethionema</taxon>
    </lineage>
</organism>
<comment type="function">
    <text evidence="2">RuBisCO catalyzes two reactions: the carboxylation of D-ribulose 1,5-bisphosphate, the primary event in carbon dioxide fixation, as well as the oxidative fragmentation of the pentose substrate in the photorespiration process. Both reactions occur simultaneously and in competition at the same active site.</text>
</comment>
<comment type="catalytic activity">
    <reaction evidence="2">
        <text>2 (2R)-3-phosphoglycerate + 2 H(+) = D-ribulose 1,5-bisphosphate + CO2 + H2O</text>
        <dbReference type="Rhea" id="RHEA:23124"/>
        <dbReference type="ChEBI" id="CHEBI:15377"/>
        <dbReference type="ChEBI" id="CHEBI:15378"/>
        <dbReference type="ChEBI" id="CHEBI:16526"/>
        <dbReference type="ChEBI" id="CHEBI:57870"/>
        <dbReference type="ChEBI" id="CHEBI:58272"/>
        <dbReference type="EC" id="4.1.1.39"/>
    </reaction>
</comment>
<comment type="catalytic activity">
    <reaction evidence="2">
        <text>D-ribulose 1,5-bisphosphate + O2 = 2-phosphoglycolate + (2R)-3-phosphoglycerate + 2 H(+)</text>
        <dbReference type="Rhea" id="RHEA:36631"/>
        <dbReference type="ChEBI" id="CHEBI:15378"/>
        <dbReference type="ChEBI" id="CHEBI:15379"/>
        <dbReference type="ChEBI" id="CHEBI:57870"/>
        <dbReference type="ChEBI" id="CHEBI:58033"/>
        <dbReference type="ChEBI" id="CHEBI:58272"/>
    </reaction>
</comment>
<comment type="cofactor">
    <cofactor evidence="2">
        <name>Mg(2+)</name>
        <dbReference type="ChEBI" id="CHEBI:18420"/>
    </cofactor>
    <text evidence="2">Binds 1 Mg(2+) ion per subunit.</text>
</comment>
<comment type="subunit">
    <text evidence="2">Heterohexadecamer of 8 large chains and 8 small chains; disulfide-linked. The disulfide link is formed within the large subunit homodimers.</text>
</comment>
<comment type="subcellular location">
    <subcellularLocation>
        <location>Plastid</location>
        <location>Chloroplast</location>
    </subcellularLocation>
</comment>
<comment type="PTM">
    <text evidence="2">The disulfide bond which can form in the large chain dimeric partners within the hexadecamer appears to be associated with oxidative stress and protein turnover.</text>
</comment>
<comment type="miscellaneous">
    <text evidence="2">The basic functional RuBisCO is composed of a large chain homodimer in a 'head-to-tail' conformation. In form I RuBisCO this homodimer is arranged in a barrel-like tetramer with the small subunits forming a tetrameric 'cap' on each end of the 'barrel'.</text>
</comment>
<comment type="similarity">
    <text evidence="2">Belongs to the RuBisCO large chain family. Type I subfamily.</text>
</comment>
<sequence>MSPQTETKASVGFKAGVKEYKLTYYTPEYETKDTDILAAFRVTPQPGVPPEEAGAAVAAESSTGTWTTVWTDGLTSLDRYKGRCYHIEPVPGEESQFIAYVAYPLDLFEEGSVTNMFTSIVGNVFGFKALAALRLEDLRIPPAYTKTFQGPPHGIQVERDKLNKYGRPLLGCTIKPKLGLSAKNYGRAVYECLRGGLDFTKDDENVNSQPFMRWRDRFLFCAEAIYKSQAETGEIKGHYLNATAGTCEEMIKRAVFARELGVPIVMHDYLTGGFTANTSLAHYCRDNGLLLHIHRAMHAVIDRQKNHGMHFRVLAKALRLSGGDHIHAGTVVGKLEGDRESTLGFVDLLRDDYVEKDRSRGIFFTQDWVSLPGVLPVASGGIHVWHMPALTEIFGDDSVLQFGGGTLGHPWGNAPGAVANRVALEACVQARNEGRDLAVEGNEIIREACKWSPELAAACEVWKEIRFNFPTIDKLDPSAEKVA</sequence>
<reference key="1">
    <citation type="submission" date="2007-03" db="EMBL/GenBank/DDBJ databases">
        <title>Sequencing analysis of Aethionema coridifolium chloroplast DNA.</title>
        <authorList>
            <person name="Hosouchi T."/>
            <person name="Tsuruoka H."/>
            <person name="Kotani H."/>
        </authorList>
    </citation>
    <scope>NUCLEOTIDE SEQUENCE [LARGE SCALE GENOMIC DNA]</scope>
</reference>
<protein>
    <recommendedName>
        <fullName evidence="2">Ribulose bisphosphate carboxylase large chain</fullName>
        <shortName evidence="2">RuBisCO large subunit</shortName>
        <ecNumber evidence="2">4.1.1.39</ecNumber>
    </recommendedName>
</protein>
<geneLocation type="chloroplast"/>
<evidence type="ECO:0000250" key="1">
    <source>
        <dbReference type="UniProtKB" id="O03042"/>
    </source>
</evidence>
<evidence type="ECO:0000255" key="2">
    <source>
        <dbReference type="HAMAP-Rule" id="MF_01338"/>
    </source>
</evidence>